<gene>
    <name evidence="1" type="primary">fucU</name>
    <name type="ordered locus">SPAB_03707</name>
</gene>
<name>FUCM_SALPB</name>
<comment type="function">
    <text evidence="1">Involved in the anomeric conversion of L-fucose.</text>
</comment>
<comment type="catalytic activity">
    <reaction evidence="1">
        <text>alpha-L-fucose = beta-L-fucose</text>
        <dbReference type="Rhea" id="RHEA:25580"/>
        <dbReference type="ChEBI" id="CHEBI:42548"/>
        <dbReference type="ChEBI" id="CHEBI:42589"/>
        <dbReference type="EC" id="5.1.3.29"/>
    </reaction>
</comment>
<comment type="pathway">
    <text evidence="1">Carbohydrate metabolism; L-fucose metabolism.</text>
</comment>
<comment type="subunit">
    <text evidence="1">Homodecamer.</text>
</comment>
<comment type="subcellular location">
    <subcellularLocation>
        <location evidence="1">Cytoplasm</location>
    </subcellularLocation>
</comment>
<comment type="similarity">
    <text evidence="1">Belongs to the RbsD / FucU family. FucU mutarotase subfamily.</text>
</comment>
<feature type="chain" id="PRO_1000187198" description="L-fucose mutarotase">
    <location>
        <begin position="1"/>
        <end position="140"/>
    </location>
</feature>
<feature type="active site" description="Proton donor" evidence="1">
    <location>
        <position position="22"/>
    </location>
</feature>
<feature type="binding site" evidence="1">
    <location>
        <position position="30"/>
    </location>
    <ligand>
        <name>substrate</name>
    </ligand>
</feature>
<feature type="binding site" evidence="1">
    <location>
        <position position="107"/>
    </location>
    <ligand>
        <name>substrate</name>
    </ligand>
</feature>
<feature type="binding site" evidence="1">
    <location>
        <begin position="129"/>
        <end position="131"/>
    </location>
    <ligand>
        <name>substrate</name>
    </ligand>
</feature>
<protein>
    <recommendedName>
        <fullName evidence="1">L-fucose mutarotase</fullName>
        <ecNumber evidence="1">5.1.3.29</ecNumber>
    </recommendedName>
    <alternativeName>
        <fullName evidence="1">Fucose 1-epimerase</fullName>
    </alternativeName>
    <alternativeName>
        <fullName evidence="1">Type-2 mutarotase</fullName>
    </alternativeName>
</protein>
<accession>A9N2J4</accession>
<sequence length="140" mass="15254">MLKTISPLISPTLLKVLAEMGHGDEIIFSDAHFPAHSLGPQVIRADGLSVSDLLRAIIPLFELDSYAPPLVMMAAVEGDTLDPSVEARYRDALSLEAPCPDIVRIDRYAFYERAQKAFAIVITGECAKYGNILLKKGVTP</sequence>
<evidence type="ECO:0000255" key="1">
    <source>
        <dbReference type="HAMAP-Rule" id="MF_01662"/>
    </source>
</evidence>
<reference key="1">
    <citation type="submission" date="2007-11" db="EMBL/GenBank/DDBJ databases">
        <authorList>
            <consortium name="The Salmonella enterica serovar Paratyphi B Genome Sequencing Project"/>
            <person name="McClelland M."/>
            <person name="Sanderson E.K."/>
            <person name="Porwollik S."/>
            <person name="Spieth J."/>
            <person name="Clifton W.S."/>
            <person name="Fulton R."/>
            <person name="Cordes M."/>
            <person name="Wollam A."/>
            <person name="Shah N."/>
            <person name="Pepin K."/>
            <person name="Bhonagiri V."/>
            <person name="Nash W."/>
            <person name="Johnson M."/>
            <person name="Thiruvilangam P."/>
            <person name="Wilson R."/>
        </authorList>
    </citation>
    <scope>NUCLEOTIDE SEQUENCE [LARGE SCALE GENOMIC DNA]</scope>
    <source>
        <strain>ATCC BAA-1250 / SPB7</strain>
    </source>
</reference>
<keyword id="KW-0119">Carbohydrate metabolism</keyword>
<keyword id="KW-0963">Cytoplasm</keyword>
<keyword id="KW-0294">Fucose metabolism</keyword>
<keyword id="KW-0413">Isomerase</keyword>
<proteinExistence type="inferred from homology"/>
<organism>
    <name type="scientific">Salmonella paratyphi B (strain ATCC BAA-1250 / SPB7)</name>
    <dbReference type="NCBI Taxonomy" id="1016998"/>
    <lineage>
        <taxon>Bacteria</taxon>
        <taxon>Pseudomonadati</taxon>
        <taxon>Pseudomonadota</taxon>
        <taxon>Gammaproteobacteria</taxon>
        <taxon>Enterobacterales</taxon>
        <taxon>Enterobacteriaceae</taxon>
        <taxon>Salmonella</taxon>
    </lineage>
</organism>
<dbReference type="EC" id="5.1.3.29" evidence="1"/>
<dbReference type="EMBL" id="CP000886">
    <property type="protein sequence ID" value="ABX69045.1"/>
    <property type="molecule type" value="Genomic_DNA"/>
</dbReference>
<dbReference type="RefSeq" id="WP_000920848.1">
    <property type="nucleotide sequence ID" value="NC_010102.1"/>
</dbReference>
<dbReference type="SMR" id="A9N2J4"/>
<dbReference type="KEGG" id="spq:SPAB_03707"/>
<dbReference type="PATRIC" id="fig|1016998.12.peg.3491"/>
<dbReference type="HOGENOM" id="CLU_120075_1_0_6"/>
<dbReference type="BioCyc" id="SENT1016998:SPAB_RS15085-MONOMER"/>
<dbReference type="UniPathway" id="UPA00956"/>
<dbReference type="Proteomes" id="UP000008556">
    <property type="component" value="Chromosome"/>
</dbReference>
<dbReference type="GO" id="GO:0005737">
    <property type="term" value="C:cytoplasm"/>
    <property type="evidence" value="ECO:0007669"/>
    <property type="project" value="UniProtKB-SubCell"/>
</dbReference>
<dbReference type="GO" id="GO:0042806">
    <property type="term" value="F:fucose binding"/>
    <property type="evidence" value="ECO:0007669"/>
    <property type="project" value="InterPro"/>
</dbReference>
<dbReference type="GO" id="GO:0036373">
    <property type="term" value="F:L-fucose mutarotase activity"/>
    <property type="evidence" value="ECO:0007669"/>
    <property type="project" value="UniProtKB-EC"/>
</dbReference>
<dbReference type="GO" id="GO:0036065">
    <property type="term" value="P:fucosylation"/>
    <property type="evidence" value="ECO:0007669"/>
    <property type="project" value="TreeGrafter"/>
</dbReference>
<dbReference type="GO" id="GO:0042354">
    <property type="term" value="P:L-fucose metabolic process"/>
    <property type="evidence" value="ECO:0007669"/>
    <property type="project" value="UniProtKB-UniRule"/>
</dbReference>
<dbReference type="FunFam" id="3.40.1650.10:FF:000001">
    <property type="entry name" value="L-fucose mutarotase"/>
    <property type="match status" value="1"/>
</dbReference>
<dbReference type="Gene3D" id="3.40.1650.10">
    <property type="entry name" value="RbsD-like domain"/>
    <property type="match status" value="1"/>
</dbReference>
<dbReference type="HAMAP" id="MF_01662">
    <property type="entry name" value="L_fucose_rotase"/>
    <property type="match status" value="1"/>
</dbReference>
<dbReference type="InterPro" id="IPR023751">
    <property type="entry name" value="L-fucose_mutarotase"/>
</dbReference>
<dbReference type="InterPro" id="IPR023750">
    <property type="entry name" value="RbsD-like_sf"/>
</dbReference>
<dbReference type="InterPro" id="IPR050443">
    <property type="entry name" value="RbsD/FucU_mutarotase"/>
</dbReference>
<dbReference type="InterPro" id="IPR007721">
    <property type="entry name" value="RbsD_FucU"/>
</dbReference>
<dbReference type="NCBIfam" id="NF011949">
    <property type="entry name" value="PRK15420.1"/>
    <property type="match status" value="1"/>
</dbReference>
<dbReference type="PANTHER" id="PTHR31690">
    <property type="entry name" value="FUCOSE MUTAROTASE"/>
    <property type="match status" value="1"/>
</dbReference>
<dbReference type="PANTHER" id="PTHR31690:SF4">
    <property type="entry name" value="FUCOSE MUTAROTASE"/>
    <property type="match status" value="1"/>
</dbReference>
<dbReference type="Pfam" id="PF05025">
    <property type="entry name" value="RbsD_FucU"/>
    <property type="match status" value="1"/>
</dbReference>
<dbReference type="SUPFAM" id="SSF102546">
    <property type="entry name" value="RbsD-like"/>
    <property type="match status" value="1"/>
</dbReference>